<protein>
    <recommendedName>
        <fullName>Uncharacterized protein ZK686.1</fullName>
    </recommendedName>
</protein>
<dbReference type="EMBL" id="FO080431">
    <property type="protein sequence ID" value="CCD63646.1"/>
    <property type="molecule type" value="Genomic_DNA"/>
</dbReference>
<dbReference type="PIR" id="S44910">
    <property type="entry name" value="S44910"/>
</dbReference>
<dbReference type="RefSeq" id="NP_001379638.1">
    <property type="nucleotide sequence ID" value="NM_001392145.1"/>
</dbReference>
<dbReference type="RefSeq" id="NP_498693.2">
    <property type="nucleotide sequence ID" value="NM_066292.3"/>
</dbReference>
<dbReference type="STRING" id="6239.ZK686.1.1"/>
<dbReference type="PaxDb" id="6239-ZK686.1.1"/>
<dbReference type="EnsemblMetazoa" id="ZK686.1.1">
    <property type="protein sequence ID" value="ZK686.1.1"/>
    <property type="gene ID" value="WBGene00022791"/>
</dbReference>
<dbReference type="EnsemblMetazoa" id="ZK686.1.2">
    <property type="protein sequence ID" value="ZK686.1.2"/>
    <property type="gene ID" value="WBGene00022791"/>
</dbReference>
<dbReference type="EnsemblMetazoa" id="ZK686.1.3">
    <property type="protein sequence ID" value="ZK686.1.3"/>
    <property type="gene ID" value="WBGene00022791"/>
</dbReference>
<dbReference type="GeneID" id="191404"/>
<dbReference type="UCSC" id="ZK686.1">
    <property type="organism name" value="c. elegans"/>
</dbReference>
<dbReference type="AGR" id="WB:WBGene00022791"/>
<dbReference type="WormBase" id="ZK686.1">
    <property type="protein sequence ID" value="CE34463"/>
    <property type="gene ID" value="WBGene00022791"/>
</dbReference>
<dbReference type="eggNOG" id="KOG2988">
    <property type="taxonomic scope" value="Eukaryota"/>
</dbReference>
<dbReference type="HOGENOM" id="CLU_3225099_0_0_1"/>
<dbReference type="InParanoid" id="P34667"/>
<dbReference type="PRO" id="PR:P34667"/>
<dbReference type="Proteomes" id="UP000001940">
    <property type="component" value="Chromosome III"/>
</dbReference>
<dbReference type="Bgee" id="WBGene00022791">
    <property type="expression patterns" value="Expressed in embryo and 3 other cell types or tissues"/>
</dbReference>
<proteinExistence type="predicted"/>
<accession>P34667</accession>
<keyword id="KW-1185">Reference proteome</keyword>
<feature type="chain" id="PRO_0000065542" description="Uncharacterized protein ZK686.1">
    <location>
        <begin position="1"/>
        <end position="44"/>
    </location>
</feature>
<organism>
    <name type="scientific">Caenorhabditis elegans</name>
    <dbReference type="NCBI Taxonomy" id="6239"/>
    <lineage>
        <taxon>Eukaryota</taxon>
        <taxon>Metazoa</taxon>
        <taxon>Ecdysozoa</taxon>
        <taxon>Nematoda</taxon>
        <taxon>Chromadorea</taxon>
        <taxon>Rhabditida</taxon>
        <taxon>Rhabditina</taxon>
        <taxon>Rhabditomorpha</taxon>
        <taxon>Rhabditoidea</taxon>
        <taxon>Rhabditidae</taxon>
        <taxon>Peloderinae</taxon>
        <taxon>Caenorhabditis</taxon>
    </lineage>
</organism>
<sequence>MVMKTGQYVLYEQKLKSLLNENAKLVINTKHREFSNWKDPSCSS</sequence>
<reference key="1">
    <citation type="journal article" date="1994" name="Nature">
        <title>2.2 Mb of contiguous nucleotide sequence from chromosome III of C. elegans.</title>
        <authorList>
            <person name="Wilson R."/>
            <person name="Ainscough R."/>
            <person name="Anderson K."/>
            <person name="Baynes C."/>
            <person name="Berks M."/>
            <person name="Bonfield J."/>
            <person name="Burton J."/>
            <person name="Connell M."/>
            <person name="Copsey T."/>
            <person name="Cooper J."/>
            <person name="Coulson A."/>
            <person name="Craxton M."/>
            <person name="Dear S."/>
            <person name="Du Z."/>
            <person name="Durbin R."/>
            <person name="Favello A."/>
            <person name="Fraser A."/>
            <person name="Fulton L."/>
            <person name="Gardner A."/>
            <person name="Green P."/>
            <person name="Hawkins T."/>
            <person name="Hillier L."/>
            <person name="Jier M."/>
            <person name="Johnston L."/>
            <person name="Jones M."/>
            <person name="Kershaw J."/>
            <person name="Kirsten J."/>
            <person name="Laisster N."/>
            <person name="Latreille P."/>
            <person name="Lightning J."/>
            <person name="Lloyd C."/>
            <person name="Mortimore B."/>
            <person name="O'Callaghan M."/>
            <person name="Parsons J."/>
            <person name="Percy C."/>
            <person name="Rifken L."/>
            <person name="Roopra A."/>
            <person name="Saunders D."/>
            <person name="Shownkeen R."/>
            <person name="Sims M."/>
            <person name="Smaldon N."/>
            <person name="Smith A."/>
            <person name="Smith M."/>
            <person name="Sonnhammer E."/>
            <person name="Staden R."/>
            <person name="Sulston J."/>
            <person name="Thierry-Mieg J."/>
            <person name="Thomas K."/>
            <person name="Vaudin M."/>
            <person name="Vaughan K."/>
            <person name="Waterston R."/>
            <person name="Watson A."/>
            <person name="Weinstock L."/>
            <person name="Wilkinson-Sproat J."/>
            <person name="Wohldman P."/>
        </authorList>
    </citation>
    <scope>NUCLEOTIDE SEQUENCE [LARGE SCALE GENOMIC DNA]</scope>
    <source>
        <strain>Bristol N2</strain>
    </source>
</reference>
<reference key="2">
    <citation type="journal article" date="1998" name="Science">
        <title>Genome sequence of the nematode C. elegans: a platform for investigating biology.</title>
        <authorList>
            <consortium name="The C. elegans sequencing consortium"/>
        </authorList>
    </citation>
    <scope>NUCLEOTIDE SEQUENCE [LARGE SCALE GENOMIC DNA]</scope>
    <source>
        <strain>Bristol N2</strain>
    </source>
</reference>
<gene>
    <name type="ORF">ZK686.1</name>
</gene>
<name>YO11_CAEEL</name>